<protein>
    <recommendedName>
        <fullName>Zinc finger X-chromosomal protein</fullName>
    </recommendedName>
</protein>
<comment type="function">
    <text evidence="1">Probable transcriptional activator.</text>
</comment>
<comment type="subcellular location">
    <subcellularLocation>
        <location>Nucleus</location>
    </subcellularLocation>
</comment>
<comment type="similarity">
    <text evidence="4">Belongs to the krueppel C2H2-type zinc-finger protein family. ZFX/ZFY subfamily.</text>
</comment>
<sequence>MDEDGLELQPQEPNSFFDTTGADATHMDGDQIVVEVQETVFVSDVVDSDITVHNFVPDDPDSVVIQDVIEDVVIEDVQCPDIMEEADVSETVIIPEQVLDSDVTEEVSLAHCTVPDDVLASDITSASMSMPEHVLTSESIHVSDIGHVEHVVHDSVVEAEIVTDPLTADVVSEEVLVADCASEAVIDANGIPVDQQEDDKGNCEDYLMISLDDAGKIEHDGSSGMTMDAESEIDPCKVDGTCPEVIKVYIFKADPGEDDLGGTVDIVESEPENDHGVELLDQNNSIRVPREKMVYMTVNDSQQEDEDLNVAEIADEVYMEVIVGEEDAAAAAAAAAAHEQQMDDNEIKTFMPIAWAAAYGNNSDGIENRNGTASALLHIDESAGLGRLAKQKPKKRRRPDSRQYQTAIIIGPDGHPLTVYPCMICGKKFKSRGFLKRHMKNHPEHLTKKKYRCTDCDYTTNKKISLHNHLESHKLTSKAEKAIECDECGKHFSHAGALFTHKMVHKEKGANKMHKCKFCEYETAEQGLLNRHLLAVHSKNFPHICVECGKGFRHPSELKKHMRIHTGEKPYQCQYCEYRSADSSNLKTHVKTKHSKEMPFKCDICLLTFSDTKEVQQHALIHQESKTHQCLHCDHKSSNSSDLKRHIISVHTKDYPHKCDMCDKGFHRPSELKKHVAAHKGKKMHQCRHCDFKIADPFVLSRHILSVHTKDLPFRCKRCRKGFRQQNELKKHMKTHSGRKVYQCEYCEYSTTDASGFKRHVISIHTKDYPHRCEYCKKGFRRPSEKNQHIMRHHKEVGLP</sequence>
<feature type="chain" id="PRO_0000047257" description="Zinc finger X-chromosomal protein">
    <location>
        <begin position="1"/>
        <end position="800"/>
    </location>
</feature>
<feature type="zinc finger region" description="C2H2-type 1" evidence="3">
    <location>
        <begin position="420"/>
        <end position="442"/>
    </location>
</feature>
<feature type="zinc finger region" description="C2H2-type 2" evidence="3">
    <location>
        <begin position="451"/>
        <end position="473"/>
    </location>
</feature>
<feature type="zinc finger region" description="C2H2-type 3" evidence="3">
    <location>
        <begin position="483"/>
        <end position="505"/>
    </location>
</feature>
<feature type="zinc finger region" description="C2H2-type 4" evidence="3">
    <location>
        <begin position="514"/>
        <end position="537"/>
    </location>
</feature>
<feature type="zinc finger region" description="C2H2-type 5" evidence="3">
    <location>
        <begin position="543"/>
        <end position="565"/>
    </location>
</feature>
<feature type="zinc finger region" description="C2H2-type 6" evidence="3">
    <location>
        <begin position="571"/>
        <end position="594"/>
    </location>
</feature>
<feature type="zinc finger region" description="C2H2-type 7" evidence="3">
    <location>
        <begin position="600"/>
        <end position="622"/>
    </location>
</feature>
<feature type="zinc finger region" description="C2H2-type 8" evidence="3">
    <location>
        <begin position="628"/>
        <end position="651"/>
    </location>
</feature>
<feature type="zinc finger region" description="C2H2-type 9" evidence="3">
    <location>
        <begin position="657"/>
        <end position="679"/>
    </location>
</feature>
<feature type="zinc finger region" description="C2H2-type 10" evidence="3">
    <location>
        <begin position="685"/>
        <end position="708"/>
    </location>
</feature>
<feature type="zinc finger region" description="C2H2-type 11" evidence="3">
    <location>
        <begin position="714"/>
        <end position="736"/>
    </location>
</feature>
<feature type="zinc finger region" description="C2H2-type 12" evidence="3">
    <location>
        <begin position="742"/>
        <end position="765"/>
    </location>
</feature>
<feature type="zinc finger region" description="C2H2-type 13" evidence="3">
    <location>
        <begin position="771"/>
        <end position="794"/>
    </location>
</feature>
<feature type="modified residue" description="Phosphoserine" evidence="2">
    <location>
        <position position="269"/>
    </location>
</feature>
<feature type="sequence conflict" description="In Ref. 1; BAA28278." evidence="4" ref="1">
    <original>AAAAAAAAAHE</original>
    <variation>VPLQQPLPPMK</variation>
    <location>
        <begin position="329"/>
        <end position="339"/>
    </location>
</feature>
<feature type="sequence conflict" description="In Ref. 1; BAA28278." evidence="4" ref="1">
    <original>S</original>
    <variation>Y</variation>
    <location>
        <position position="363"/>
    </location>
</feature>
<feature type="sequence conflict" description="In Ref. 1; BAA28278." evidence="4" ref="1">
    <original>L</original>
    <variation>F</variation>
    <location>
        <position position="376"/>
    </location>
</feature>
<feature type="sequence conflict" description="In Ref. 2; AAL18260." evidence="4" ref="2">
    <original>R</original>
    <variation>P</variation>
    <location>
        <position position="531"/>
    </location>
</feature>
<feature type="sequence conflict" description="In Ref. 2; AAL18260." evidence="4" ref="2">
    <original>E</original>
    <variation>K</variation>
    <location>
        <position position="557"/>
    </location>
</feature>
<feature type="sequence conflict" description="In Ref. 2; AAL18260." evidence="4" ref="2">
    <original>D</original>
    <variation>N</variation>
    <location>
        <position position="582"/>
    </location>
</feature>
<feature type="sequence conflict" description="In Ref. 2; AAL18260." evidence="4" ref="2">
    <original>AL</original>
    <variation>VF</variation>
    <location>
        <begin position="619"/>
        <end position="620"/>
    </location>
</feature>
<feature type="sequence conflict" description="In Ref. 2; AAL18260." evidence="4" ref="2">
    <original>L</original>
    <variation>F</variation>
    <location>
        <position position="712"/>
    </location>
</feature>
<gene>
    <name type="primary">ZFX</name>
</gene>
<evidence type="ECO:0000250" key="1">
    <source>
        <dbReference type="UniProtKB" id="P17010"/>
    </source>
</evidence>
<evidence type="ECO:0000250" key="2">
    <source>
        <dbReference type="UniProtKB" id="P17012"/>
    </source>
</evidence>
<evidence type="ECO:0000255" key="3">
    <source>
        <dbReference type="PROSITE-ProRule" id="PRU00042"/>
    </source>
</evidence>
<evidence type="ECO:0000305" key="4"/>
<keyword id="KW-0010">Activator</keyword>
<keyword id="KW-0238">DNA-binding</keyword>
<keyword id="KW-0479">Metal-binding</keyword>
<keyword id="KW-0539">Nucleus</keyword>
<keyword id="KW-0597">Phosphoprotein</keyword>
<keyword id="KW-1185">Reference proteome</keyword>
<keyword id="KW-0677">Repeat</keyword>
<keyword id="KW-0804">Transcription</keyword>
<keyword id="KW-0805">Transcription regulation</keyword>
<keyword id="KW-0862">Zinc</keyword>
<keyword id="KW-0863">Zinc-finger</keyword>
<reference key="1">
    <citation type="journal article" date="1998" name="Mamm. Genome">
        <title>Cloning and mapping of bovine ZFX gene to the long arm of the X-chromosome (Xq34) and homologous mapping of ZFY gene to the distal region of the short arm of the bovine (Yp13), ovine (Yp12-p13), and caprine (Yp12-p13) Y chromosome.</title>
        <authorList>
            <person name="Xiao C."/>
            <person name="Tsuchiya K."/>
            <person name="Sutou S."/>
        </authorList>
    </citation>
    <scope>NUCLEOTIDE SEQUENCE [MRNA]</scope>
    <source>
        <strain>Japanese black</strain>
        <tissue>Testis</tissue>
    </source>
</reference>
<reference key="2">
    <citation type="submission" date="1997-11" db="EMBL/GenBank/DDBJ databases">
        <title>Bovine ZFX and ZFY genes reveal extensive similarity to human zinc finger protein genes.</title>
        <authorList>
            <person name="Poloumienko A."/>
            <person name="Blecher S."/>
        </authorList>
    </citation>
    <scope>NUCLEOTIDE SEQUENCE [MRNA]</scope>
</reference>
<name>ZFX_BOVIN</name>
<dbReference type="EMBL" id="D84097">
    <property type="protein sequence ID" value="BAA28278.1"/>
    <property type="molecule type" value="mRNA"/>
</dbReference>
<dbReference type="EMBL" id="AF032866">
    <property type="protein sequence ID" value="AAL18260.1"/>
    <property type="molecule type" value="mRNA"/>
</dbReference>
<dbReference type="RefSeq" id="NP_803456.2">
    <property type="nucleotide sequence ID" value="NM_177490.2"/>
</dbReference>
<dbReference type="SMR" id="O62836"/>
<dbReference type="FunCoup" id="O62836">
    <property type="interactions" value="2678"/>
</dbReference>
<dbReference type="STRING" id="9913.ENSBTAP00000010165"/>
<dbReference type="PaxDb" id="9913-ENSBTAP00000010165"/>
<dbReference type="GeneID" id="280961"/>
<dbReference type="KEGG" id="bta:280961"/>
<dbReference type="CTD" id="7543"/>
<dbReference type="VEuPathDB" id="HostDB:ENSBTAG00000007730"/>
<dbReference type="eggNOG" id="KOG1721">
    <property type="taxonomic scope" value="Eukaryota"/>
</dbReference>
<dbReference type="HOGENOM" id="CLU_021097_0_0_1"/>
<dbReference type="InParanoid" id="O62836"/>
<dbReference type="OMA" id="PDIEHME"/>
<dbReference type="OrthoDB" id="3561125at2759"/>
<dbReference type="TreeFam" id="TF335557"/>
<dbReference type="Proteomes" id="UP000009136">
    <property type="component" value="Chromosome X"/>
</dbReference>
<dbReference type="Bgee" id="ENSBTAG00000007730">
    <property type="expression patterns" value="Expressed in spiral colon and 112 other cell types or tissues"/>
</dbReference>
<dbReference type="GO" id="GO:0005634">
    <property type="term" value="C:nucleus"/>
    <property type="evidence" value="ECO:0007669"/>
    <property type="project" value="UniProtKB-SubCell"/>
</dbReference>
<dbReference type="GO" id="GO:0001228">
    <property type="term" value="F:DNA-binding transcription activator activity, RNA polymerase II-specific"/>
    <property type="evidence" value="ECO:0000250"/>
    <property type="project" value="UniProtKB"/>
</dbReference>
<dbReference type="GO" id="GO:0000981">
    <property type="term" value="F:DNA-binding transcription factor activity, RNA polymerase II-specific"/>
    <property type="evidence" value="ECO:0000318"/>
    <property type="project" value="GO_Central"/>
</dbReference>
<dbReference type="GO" id="GO:0000978">
    <property type="term" value="F:RNA polymerase II cis-regulatory region sequence-specific DNA binding"/>
    <property type="evidence" value="ECO:0000318"/>
    <property type="project" value="GO_Central"/>
</dbReference>
<dbReference type="GO" id="GO:0008270">
    <property type="term" value="F:zinc ion binding"/>
    <property type="evidence" value="ECO:0007669"/>
    <property type="project" value="UniProtKB-KW"/>
</dbReference>
<dbReference type="GO" id="GO:0006355">
    <property type="term" value="P:regulation of DNA-templated transcription"/>
    <property type="evidence" value="ECO:0000318"/>
    <property type="project" value="GO_Central"/>
</dbReference>
<dbReference type="FunFam" id="3.30.160.60:FF:000054">
    <property type="entry name" value="Zinc finger protein 711"/>
    <property type="match status" value="1"/>
</dbReference>
<dbReference type="FunFam" id="3.30.160.60:FF:000209">
    <property type="entry name" value="Zinc finger protein 711"/>
    <property type="match status" value="3"/>
</dbReference>
<dbReference type="FunFam" id="3.30.160.60:FF:000170">
    <property type="entry name" value="Zinc finger protein 711 isoform X2"/>
    <property type="match status" value="1"/>
</dbReference>
<dbReference type="FunFam" id="3.30.160.60:FF:000607">
    <property type="entry name" value="zinc finger X-chromosomal protein-like isoform X1"/>
    <property type="match status" value="1"/>
</dbReference>
<dbReference type="FunFam" id="3.30.160.60:FF:000461">
    <property type="entry name" value="Zinc finger X-chromosomal protein-like protein"/>
    <property type="match status" value="1"/>
</dbReference>
<dbReference type="Gene3D" id="3.30.160.60">
    <property type="entry name" value="Classic Zinc Finger"/>
    <property type="match status" value="8"/>
</dbReference>
<dbReference type="InterPro" id="IPR050752">
    <property type="entry name" value="C2H2-ZF_domain"/>
</dbReference>
<dbReference type="InterPro" id="IPR006794">
    <property type="entry name" value="Transcrp_activ_Zfx/Zfy-dom"/>
</dbReference>
<dbReference type="InterPro" id="IPR036236">
    <property type="entry name" value="Znf_C2H2_sf"/>
</dbReference>
<dbReference type="InterPro" id="IPR013087">
    <property type="entry name" value="Znf_C2H2_type"/>
</dbReference>
<dbReference type="PANTHER" id="PTHR24384:SF189">
    <property type="entry name" value="C2H2-TYPE DOMAIN-CONTAINING PROTEIN-RELATED"/>
    <property type="match status" value="1"/>
</dbReference>
<dbReference type="PANTHER" id="PTHR24384">
    <property type="entry name" value="FINGER PUTATIVE TRANSCRIPTION FACTOR FAMILY-RELATED"/>
    <property type="match status" value="1"/>
</dbReference>
<dbReference type="Pfam" id="PF00096">
    <property type="entry name" value="zf-C2H2"/>
    <property type="match status" value="7"/>
</dbReference>
<dbReference type="Pfam" id="PF13909">
    <property type="entry name" value="zf-H2C2_5"/>
    <property type="match status" value="1"/>
</dbReference>
<dbReference type="Pfam" id="PF04704">
    <property type="entry name" value="Zfx_Zfy_act"/>
    <property type="match status" value="1"/>
</dbReference>
<dbReference type="SMART" id="SM00355">
    <property type="entry name" value="ZnF_C2H2"/>
    <property type="match status" value="13"/>
</dbReference>
<dbReference type="SUPFAM" id="SSF57667">
    <property type="entry name" value="beta-beta-alpha zinc fingers"/>
    <property type="match status" value="6"/>
</dbReference>
<dbReference type="PROSITE" id="PS00028">
    <property type="entry name" value="ZINC_FINGER_C2H2_1"/>
    <property type="match status" value="8"/>
</dbReference>
<dbReference type="PROSITE" id="PS50157">
    <property type="entry name" value="ZINC_FINGER_C2H2_2"/>
    <property type="match status" value="13"/>
</dbReference>
<proteinExistence type="evidence at transcript level"/>
<organism>
    <name type="scientific">Bos taurus</name>
    <name type="common">Bovine</name>
    <dbReference type="NCBI Taxonomy" id="9913"/>
    <lineage>
        <taxon>Eukaryota</taxon>
        <taxon>Metazoa</taxon>
        <taxon>Chordata</taxon>
        <taxon>Craniata</taxon>
        <taxon>Vertebrata</taxon>
        <taxon>Euteleostomi</taxon>
        <taxon>Mammalia</taxon>
        <taxon>Eutheria</taxon>
        <taxon>Laurasiatheria</taxon>
        <taxon>Artiodactyla</taxon>
        <taxon>Ruminantia</taxon>
        <taxon>Pecora</taxon>
        <taxon>Bovidae</taxon>
        <taxon>Bovinae</taxon>
        <taxon>Bos</taxon>
    </lineage>
</organism>
<accession>O62836</accession>
<accession>Q95LI4</accession>